<gene>
    <name type="primary">TRIM35</name>
</gene>
<reference key="1">
    <citation type="submission" date="2004-11" db="EMBL/GenBank/DDBJ databases">
        <authorList>
            <consortium name="The German cDNA consortium"/>
        </authorList>
    </citation>
    <scope>NUCLEOTIDE SEQUENCE [LARGE SCALE MRNA]</scope>
    <source>
        <tissue>Heart</tissue>
    </source>
</reference>
<organism>
    <name type="scientific">Pongo abelii</name>
    <name type="common">Sumatran orangutan</name>
    <name type="synonym">Pongo pygmaeus abelii</name>
    <dbReference type="NCBI Taxonomy" id="9601"/>
    <lineage>
        <taxon>Eukaryota</taxon>
        <taxon>Metazoa</taxon>
        <taxon>Chordata</taxon>
        <taxon>Craniata</taxon>
        <taxon>Vertebrata</taxon>
        <taxon>Euteleostomi</taxon>
        <taxon>Mammalia</taxon>
        <taxon>Eutheria</taxon>
        <taxon>Euarchontoglires</taxon>
        <taxon>Primates</taxon>
        <taxon>Haplorrhini</taxon>
        <taxon>Catarrhini</taxon>
        <taxon>Hominidae</taxon>
        <taxon>Pongo</taxon>
    </lineage>
</organism>
<accession>Q5RBG2</accession>
<evidence type="ECO:0000250" key="1"/>
<evidence type="ECO:0000250" key="2">
    <source>
        <dbReference type="UniProtKB" id="Q8C006"/>
    </source>
</evidence>
<evidence type="ECO:0000250" key="3">
    <source>
        <dbReference type="UniProtKB" id="Q9UPQ4"/>
    </source>
</evidence>
<evidence type="ECO:0000255" key="4"/>
<evidence type="ECO:0000255" key="5">
    <source>
        <dbReference type="PROSITE-ProRule" id="PRU00024"/>
    </source>
</evidence>
<evidence type="ECO:0000255" key="6">
    <source>
        <dbReference type="PROSITE-ProRule" id="PRU00175"/>
    </source>
</evidence>
<evidence type="ECO:0000255" key="7">
    <source>
        <dbReference type="PROSITE-ProRule" id="PRU00548"/>
    </source>
</evidence>
<protein>
    <recommendedName>
        <fullName>E3 ubiquitin-protein ligase TRIM35</fullName>
        <ecNumber>2.3.2.27</ecNumber>
    </recommendedName>
</protein>
<feature type="chain" id="PRO_0000345146" description="E3 ubiquitin-protein ligase TRIM35">
    <location>
        <begin position="1"/>
        <end position="492"/>
    </location>
</feature>
<feature type="domain" description="B30.2/SPRY" evidence="7">
    <location>
        <begin position="283"/>
        <end position="486"/>
    </location>
</feature>
<feature type="zinc finger region" description="RING-type" evidence="6">
    <location>
        <begin position="21"/>
        <end position="61"/>
    </location>
</feature>
<feature type="zinc finger region" description="B box-type" evidence="5">
    <location>
        <begin position="96"/>
        <end position="137"/>
    </location>
</feature>
<feature type="coiled-coil region" evidence="4">
    <location>
        <begin position="210"/>
        <end position="249"/>
    </location>
</feature>
<feature type="binding site" evidence="5">
    <location>
        <position position="101"/>
    </location>
    <ligand>
        <name>Zn(2+)</name>
        <dbReference type="ChEBI" id="CHEBI:29105"/>
    </ligand>
</feature>
<feature type="binding site" evidence="5">
    <location>
        <position position="104"/>
    </location>
    <ligand>
        <name>Zn(2+)</name>
        <dbReference type="ChEBI" id="CHEBI:29105"/>
    </ligand>
</feature>
<feature type="binding site" evidence="5">
    <location>
        <position position="123"/>
    </location>
    <ligand>
        <name>Zn(2+)</name>
        <dbReference type="ChEBI" id="CHEBI:29105"/>
    </ligand>
</feature>
<feature type="binding site" evidence="5">
    <location>
        <position position="129"/>
    </location>
    <ligand>
        <name>Zn(2+)</name>
        <dbReference type="ChEBI" id="CHEBI:29105"/>
    </ligand>
</feature>
<feature type="modified residue" description="N-acetylmethionine" evidence="3">
    <location>
        <position position="1"/>
    </location>
</feature>
<feature type="modified residue" description="Phosphoserine" evidence="3">
    <location>
        <position position="4"/>
    </location>
</feature>
<feature type="modified residue" description="Phosphoserine" evidence="3">
    <location>
        <position position="8"/>
    </location>
</feature>
<sequence length="492" mass="56467">MERSPDVSPGPSRSFKEELLCAVCYDPFRDAVTLRCGHNFCRGCVSRCWEVQVSPTCPVCKDRASPADLRTNHTLNNLVEKLLREEAEGARWTSYRFSRVCRLHRGQLSLFCLEDKELLCCSCQADPRHQGHRVQPVKDTAHDFRAKCRNMEHALREKAKAFWAMRRSYEAIAKHNQVEAAWLEGRIRQEFDKLREFLRVEEQAILDAMAEETRQKQLLADEKMKQLTEETEVLAHEIERLQMEMKEDDVSFLMKHKSRKRRLFCTMEPEPVQPGMLIDVCKYLGSLQYRVWKKMLASVELPFSFDPNTAAGWLSVSDDLTSVTNHGYRVQVENPERFSSAPCLLGSRVFSQGSHAWEVALGGLQSWRVGVVRVRQDSGAEGHSHSCYHDTRSGFWYVCRTQGVEGDHCVTSDPATSPLVLAIPRRLRVELECEEGELSFYDAERHCHLYTFHARFGEVRPYFYLGGARGAGPPEPLRICPLHISVKEELDG</sequence>
<dbReference type="EC" id="2.3.2.27"/>
<dbReference type="EMBL" id="CR858687">
    <property type="protein sequence ID" value="CAH90898.1"/>
    <property type="molecule type" value="mRNA"/>
</dbReference>
<dbReference type="RefSeq" id="NP_001125511.1">
    <property type="nucleotide sequence ID" value="NM_001132039.1"/>
</dbReference>
<dbReference type="SMR" id="Q5RBG2"/>
<dbReference type="FunCoup" id="Q5RBG2">
    <property type="interactions" value="2078"/>
</dbReference>
<dbReference type="STRING" id="9601.ENSPPYP00000020690"/>
<dbReference type="GeneID" id="100172421"/>
<dbReference type="KEGG" id="pon:100172421"/>
<dbReference type="CTD" id="23087"/>
<dbReference type="eggNOG" id="KOG2177">
    <property type="taxonomic scope" value="Eukaryota"/>
</dbReference>
<dbReference type="HOGENOM" id="CLU_013137_0_3_1"/>
<dbReference type="InParanoid" id="Q5RBG2"/>
<dbReference type="OrthoDB" id="6105938at2759"/>
<dbReference type="TreeFam" id="TF334286"/>
<dbReference type="UniPathway" id="UPA00143"/>
<dbReference type="Proteomes" id="UP000001595">
    <property type="component" value="Chromosome 8"/>
</dbReference>
<dbReference type="GO" id="GO:0005737">
    <property type="term" value="C:cytoplasm"/>
    <property type="evidence" value="ECO:0007669"/>
    <property type="project" value="UniProtKB-SubCell"/>
</dbReference>
<dbReference type="GO" id="GO:0005634">
    <property type="term" value="C:nucleus"/>
    <property type="evidence" value="ECO:0007669"/>
    <property type="project" value="UniProtKB-SubCell"/>
</dbReference>
<dbReference type="GO" id="GO:0016740">
    <property type="term" value="F:transferase activity"/>
    <property type="evidence" value="ECO:0007669"/>
    <property type="project" value="UniProtKB-KW"/>
</dbReference>
<dbReference type="GO" id="GO:0008270">
    <property type="term" value="F:zinc ion binding"/>
    <property type="evidence" value="ECO:0007669"/>
    <property type="project" value="UniProtKB-KW"/>
</dbReference>
<dbReference type="GO" id="GO:0006915">
    <property type="term" value="P:apoptotic process"/>
    <property type="evidence" value="ECO:0007669"/>
    <property type="project" value="UniProtKB-KW"/>
</dbReference>
<dbReference type="GO" id="GO:0016567">
    <property type="term" value="P:protein ubiquitination"/>
    <property type="evidence" value="ECO:0007669"/>
    <property type="project" value="UniProtKB-UniPathway"/>
</dbReference>
<dbReference type="CDD" id="cd16599">
    <property type="entry name" value="RING-HC_TRIM35_C-IV"/>
    <property type="match status" value="1"/>
</dbReference>
<dbReference type="CDD" id="cd12893">
    <property type="entry name" value="SPRY_PRY_TRIM35"/>
    <property type="match status" value="1"/>
</dbReference>
<dbReference type="FunFam" id="2.60.120.920:FF:000036">
    <property type="entry name" value="Tripartite motif-containing protein 35"/>
    <property type="match status" value="1"/>
</dbReference>
<dbReference type="FunFam" id="3.30.160.60:FF:001525">
    <property type="entry name" value="Tripartite motif-containing protein 35"/>
    <property type="match status" value="1"/>
</dbReference>
<dbReference type="FunFam" id="3.30.40.10:FF:000373">
    <property type="entry name" value="Tripartite motif-containing protein 35"/>
    <property type="match status" value="1"/>
</dbReference>
<dbReference type="Gene3D" id="2.60.120.920">
    <property type="match status" value="1"/>
</dbReference>
<dbReference type="Gene3D" id="3.30.160.60">
    <property type="entry name" value="Classic Zinc Finger"/>
    <property type="match status" value="1"/>
</dbReference>
<dbReference type="Gene3D" id="3.30.40.10">
    <property type="entry name" value="Zinc/RING finger domain, C3HC4 (zinc finger)"/>
    <property type="match status" value="1"/>
</dbReference>
<dbReference type="InterPro" id="IPR001870">
    <property type="entry name" value="B30.2/SPRY"/>
</dbReference>
<dbReference type="InterPro" id="IPR043136">
    <property type="entry name" value="B30.2/SPRY_sf"/>
</dbReference>
<dbReference type="InterPro" id="IPR003879">
    <property type="entry name" value="Butyrophylin_SPRY"/>
</dbReference>
<dbReference type="InterPro" id="IPR013320">
    <property type="entry name" value="ConA-like_dom_sf"/>
</dbReference>
<dbReference type="InterPro" id="IPR006574">
    <property type="entry name" value="PRY"/>
</dbReference>
<dbReference type="InterPro" id="IPR003877">
    <property type="entry name" value="SPRY_dom"/>
</dbReference>
<dbReference type="InterPro" id="IPR050143">
    <property type="entry name" value="TRIM/RBCC"/>
</dbReference>
<dbReference type="InterPro" id="IPR027370">
    <property type="entry name" value="Znf-RING_euk"/>
</dbReference>
<dbReference type="InterPro" id="IPR000315">
    <property type="entry name" value="Znf_B-box"/>
</dbReference>
<dbReference type="InterPro" id="IPR001841">
    <property type="entry name" value="Znf_RING"/>
</dbReference>
<dbReference type="InterPro" id="IPR013083">
    <property type="entry name" value="Znf_RING/FYVE/PHD"/>
</dbReference>
<dbReference type="InterPro" id="IPR017907">
    <property type="entry name" value="Znf_RING_CS"/>
</dbReference>
<dbReference type="PANTHER" id="PTHR24103">
    <property type="entry name" value="E3 UBIQUITIN-PROTEIN LIGASE TRIM"/>
    <property type="match status" value="1"/>
</dbReference>
<dbReference type="Pfam" id="PF13765">
    <property type="entry name" value="PRY"/>
    <property type="match status" value="1"/>
</dbReference>
<dbReference type="Pfam" id="PF00622">
    <property type="entry name" value="SPRY"/>
    <property type="match status" value="1"/>
</dbReference>
<dbReference type="Pfam" id="PF00643">
    <property type="entry name" value="zf-B_box"/>
    <property type="match status" value="1"/>
</dbReference>
<dbReference type="Pfam" id="PF13445">
    <property type="entry name" value="zf-RING_UBOX"/>
    <property type="match status" value="1"/>
</dbReference>
<dbReference type="PRINTS" id="PR01407">
    <property type="entry name" value="BUTYPHLNCDUF"/>
</dbReference>
<dbReference type="SMART" id="SM00336">
    <property type="entry name" value="BBOX"/>
    <property type="match status" value="1"/>
</dbReference>
<dbReference type="SMART" id="SM00589">
    <property type="entry name" value="PRY"/>
    <property type="match status" value="1"/>
</dbReference>
<dbReference type="SMART" id="SM00184">
    <property type="entry name" value="RING"/>
    <property type="match status" value="1"/>
</dbReference>
<dbReference type="SMART" id="SM00449">
    <property type="entry name" value="SPRY"/>
    <property type="match status" value="1"/>
</dbReference>
<dbReference type="SUPFAM" id="SSF57845">
    <property type="entry name" value="B-box zinc-binding domain"/>
    <property type="match status" value="1"/>
</dbReference>
<dbReference type="SUPFAM" id="SSF49899">
    <property type="entry name" value="Concanavalin A-like lectins/glucanases"/>
    <property type="match status" value="1"/>
</dbReference>
<dbReference type="SUPFAM" id="SSF57850">
    <property type="entry name" value="RING/U-box"/>
    <property type="match status" value="1"/>
</dbReference>
<dbReference type="PROSITE" id="PS50188">
    <property type="entry name" value="B302_SPRY"/>
    <property type="match status" value="1"/>
</dbReference>
<dbReference type="PROSITE" id="PS50119">
    <property type="entry name" value="ZF_BBOX"/>
    <property type="match status" value="1"/>
</dbReference>
<dbReference type="PROSITE" id="PS00518">
    <property type="entry name" value="ZF_RING_1"/>
    <property type="match status" value="1"/>
</dbReference>
<dbReference type="PROSITE" id="PS50089">
    <property type="entry name" value="ZF_RING_2"/>
    <property type="match status" value="1"/>
</dbReference>
<keyword id="KW-0007">Acetylation</keyword>
<keyword id="KW-0053">Apoptosis</keyword>
<keyword id="KW-0175">Coiled coil</keyword>
<keyword id="KW-0963">Cytoplasm</keyword>
<keyword id="KW-0479">Metal-binding</keyword>
<keyword id="KW-0539">Nucleus</keyword>
<keyword id="KW-0597">Phosphoprotein</keyword>
<keyword id="KW-1185">Reference proteome</keyword>
<keyword id="KW-0808">Transferase</keyword>
<keyword id="KW-0833">Ubl conjugation pathway</keyword>
<keyword id="KW-0862">Zinc</keyword>
<keyword id="KW-0863">Zinc-finger</keyword>
<name>TRI35_PONAB</name>
<proteinExistence type="evidence at transcript level"/>
<comment type="function">
    <text evidence="3">E3 ubiquitin-protein ligase that participates in multiple biological processes including cell death, glucose metabolism, and in particular, the innate immune response. Mediates 'Lys-63'-linked polyubiquitination of TRAF3 thereby promoting type I interferon production via RIG-I signaling pathway. Can also catalyze 'Lys-48'-linked polyubiquitination and proteasomal degradation of viral proteins such as influenza virus PB2. Acts as a negative feedback regulator of TLR7- and TLR9-triggered signaling. Mechanistically, promotes the 'Lys-48'-linked ubiquitination of IRF7 and induces its degradation via a proteasome-dependent pathway. Reduces FGFR1-dependent tyrosine phosphorylation of PKM, inhibiting PKM-dependent lactate production, glucose metabolism, and cell growth.</text>
</comment>
<comment type="catalytic activity">
    <reaction>
        <text>S-ubiquitinyl-[E2 ubiquitin-conjugating enzyme]-L-cysteine + [acceptor protein]-L-lysine = [E2 ubiquitin-conjugating enzyme]-L-cysteine + N(6)-ubiquitinyl-[acceptor protein]-L-lysine.</text>
        <dbReference type="EC" id="2.3.2.27"/>
    </reaction>
</comment>
<comment type="pathway">
    <text>Protein modification; protein ubiquitination.</text>
</comment>
<comment type="subunit">
    <text evidence="3">Interacts with PKM isoform M2, but not isoform M1; this interaction may compete with that between PKM and FGFR1, and hence reduces FGFR1-dependent tyrosine phosphorylation of PKM. Interacts with IRF7; this interaction promotes IRF7 proteasomal degradation. Interacts with TRAF3; this interaction promotes TRAF3 activation.</text>
</comment>
<comment type="subcellular location">
    <subcellularLocation>
        <location evidence="2">Cytoplasm</location>
    </subcellularLocation>
    <subcellularLocation>
        <location evidence="2">Nucleus</location>
    </subcellularLocation>
    <text evidence="2">Found predominantly in cytoplasm with a granular distribution. Found in punctuate nuclear bodies.</text>
</comment>
<comment type="domain">
    <text evidence="1">The RING finger domain and the coiled-coil region are required for the apoptosis-inducing activity.</text>
</comment>